<sequence>MRMSRLFAPTLREIPAEAEVISHQLLLRAGFIRRSSAGVYHYLPLGQRVLQRIMAIVREEMNAAGGQELLMPIIQPAEIWLQSGRWHVYGDELFRLKDRHQRDFCLSPTHEESITDLVKNNVSSYRDLPMLLYHITNKYRDERRPRFGLMRGREFIMKDLYSFDRDEAGLHESYMKMYQAYVNIFRRCGLTFRPVEADPGAIGGTGGSHEFMVLAESGEAEIVYCDACDYAANTEKAECKPQVTPGLPPLPVEQVATPDQKTIEEVCNFLKVAPADTIKTMVFRADDDLVMALIRGDREINEVKLKNLLGCLDLRMATEEECREVSPGGAGFLGPVGIEEIPIYADPEVMAMTRAVAGANAPGAHLIHVCPGRDFTVIATADLRLVQAGEPCPQCGAPLKKARGIEVGQVFKLGTKYSKALNCTFLDEKGQENLMVMGCYGVGVSRTMAAAIEQNHDDNGIVWPMAIAPFQVLVVPVSNKDAAQMEAAEAIYKELIAKGVDTLLDDRPERAGVKFKDADLIGIPVRITVGNKLASDGVVEVKLRRGGEQFTASREDVVAQVQALIREQMEATPVS</sequence>
<keyword id="KW-0030">Aminoacyl-tRNA synthetase</keyword>
<keyword id="KW-0067">ATP-binding</keyword>
<keyword id="KW-0963">Cytoplasm</keyword>
<keyword id="KW-0436">Ligase</keyword>
<keyword id="KW-0547">Nucleotide-binding</keyword>
<keyword id="KW-0648">Protein biosynthesis</keyword>
<keyword id="KW-1185">Reference proteome</keyword>
<accession>B0THP0</accession>
<dbReference type="EC" id="6.1.1.15" evidence="1"/>
<dbReference type="EMBL" id="CP000930">
    <property type="protein sequence ID" value="ABZ84823.1"/>
    <property type="molecule type" value="Genomic_DNA"/>
</dbReference>
<dbReference type="RefSeq" id="WP_012283322.1">
    <property type="nucleotide sequence ID" value="NC_010337.2"/>
</dbReference>
<dbReference type="SMR" id="B0THP0"/>
<dbReference type="STRING" id="498761.HM1_2267"/>
<dbReference type="KEGG" id="hmo:HM1_2267"/>
<dbReference type="eggNOG" id="COG0442">
    <property type="taxonomic scope" value="Bacteria"/>
</dbReference>
<dbReference type="HOGENOM" id="CLU_016739_0_0_9"/>
<dbReference type="OrthoDB" id="9809052at2"/>
<dbReference type="Proteomes" id="UP000008550">
    <property type="component" value="Chromosome"/>
</dbReference>
<dbReference type="GO" id="GO:0005829">
    <property type="term" value="C:cytosol"/>
    <property type="evidence" value="ECO:0007669"/>
    <property type="project" value="TreeGrafter"/>
</dbReference>
<dbReference type="GO" id="GO:0002161">
    <property type="term" value="F:aminoacyl-tRNA deacylase activity"/>
    <property type="evidence" value="ECO:0007669"/>
    <property type="project" value="InterPro"/>
</dbReference>
<dbReference type="GO" id="GO:0005524">
    <property type="term" value="F:ATP binding"/>
    <property type="evidence" value="ECO:0007669"/>
    <property type="project" value="UniProtKB-UniRule"/>
</dbReference>
<dbReference type="GO" id="GO:0140096">
    <property type="term" value="F:catalytic activity, acting on a protein"/>
    <property type="evidence" value="ECO:0007669"/>
    <property type="project" value="UniProtKB-ARBA"/>
</dbReference>
<dbReference type="GO" id="GO:0004827">
    <property type="term" value="F:proline-tRNA ligase activity"/>
    <property type="evidence" value="ECO:0007669"/>
    <property type="project" value="UniProtKB-UniRule"/>
</dbReference>
<dbReference type="GO" id="GO:0016740">
    <property type="term" value="F:transferase activity"/>
    <property type="evidence" value="ECO:0007669"/>
    <property type="project" value="UniProtKB-ARBA"/>
</dbReference>
<dbReference type="GO" id="GO:0006433">
    <property type="term" value="P:prolyl-tRNA aminoacylation"/>
    <property type="evidence" value="ECO:0007669"/>
    <property type="project" value="UniProtKB-UniRule"/>
</dbReference>
<dbReference type="CDD" id="cd04334">
    <property type="entry name" value="ProRS-INS"/>
    <property type="match status" value="1"/>
</dbReference>
<dbReference type="CDD" id="cd00861">
    <property type="entry name" value="ProRS_anticodon_short"/>
    <property type="match status" value="1"/>
</dbReference>
<dbReference type="CDD" id="cd00779">
    <property type="entry name" value="ProRS_core_prok"/>
    <property type="match status" value="1"/>
</dbReference>
<dbReference type="FunFam" id="3.30.930.10:FF:000065">
    <property type="entry name" value="Proline--tRNA ligase"/>
    <property type="match status" value="1"/>
</dbReference>
<dbReference type="FunFam" id="3.30.930.10:FF:000066">
    <property type="entry name" value="Proline--tRNA ligase"/>
    <property type="match status" value="1"/>
</dbReference>
<dbReference type="FunFam" id="3.40.50.800:FF:000011">
    <property type="entry name" value="Proline--tRNA ligase"/>
    <property type="match status" value="1"/>
</dbReference>
<dbReference type="Gene3D" id="3.40.50.800">
    <property type="entry name" value="Anticodon-binding domain"/>
    <property type="match status" value="1"/>
</dbReference>
<dbReference type="Gene3D" id="3.30.930.10">
    <property type="entry name" value="Bira Bifunctional Protein, Domain 2"/>
    <property type="match status" value="2"/>
</dbReference>
<dbReference type="HAMAP" id="MF_01569">
    <property type="entry name" value="Pro_tRNA_synth_type1"/>
    <property type="match status" value="1"/>
</dbReference>
<dbReference type="InterPro" id="IPR002314">
    <property type="entry name" value="aa-tRNA-synt_IIb"/>
</dbReference>
<dbReference type="InterPro" id="IPR006195">
    <property type="entry name" value="aa-tRNA-synth_II"/>
</dbReference>
<dbReference type="InterPro" id="IPR045864">
    <property type="entry name" value="aa-tRNA-synth_II/BPL/LPL"/>
</dbReference>
<dbReference type="InterPro" id="IPR004154">
    <property type="entry name" value="Anticodon-bd"/>
</dbReference>
<dbReference type="InterPro" id="IPR036621">
    <property type="entry name" value="Anticodon-bd_dom_sf"/>
</dbReference>
<dbReference type="InterPro" id="IPR002316">
    <property type="entry name" value="Pro-tRNA-ligase_IIa"/>
</dbReference>
<dbReference type="InterPro" id="IPR004500">
    <property type="entry name" value="Pro-tRNA-synth_IIa_bac-type"/>
</dbReference>
<dbReference type="InterPro" id="IPR023717">
    <property type="entry name" value="Pro-tRNA-Synthase_IIa_type1"/>
</dbReference>
<dbReference type="InterPro" id="IPR050062">
    <property type="entry name" value="Pro-tRNA_synthetase"/>
</dbReference>
<dbReference type="InterPro" id="IPR044140">
    <property type="entry name" value="ProRS_anticodon_short"/>
</dbReference>
<dbReference type="InterPro" id="IPR033730">
    <property type="entry name" value="ProRS_core_prok"/>
</dbReference>
<dbReference type="InterPro" id="IPR036754">
    <property type="entry name" value="YbaK/aa-tRNA-synt-asso_dom_sf"/>
</dbReference>
<dbReference type="InterPro" id="IPR007214">
    <property type="entry name" value="YbaK/aa-tRNA-synth-assoc-dom"/>
</dbReference>
<dbReference type="NCBIfam" id="NF006625">
    <property type="entry name" value="PRK09194.1"/>
    <property type="match status" value="1"/>
</dbReference>
<dbReference type="NCBIfam" id="TIGR00409">
    <property type="entry name" value="proS_fam_II"/>
    <property type="match status" value="1"/>
</dbReference>
<dbReference type="PANTHER" id="PTHR42753">
    <property type="entry name" value="MITOCHONDRIAL RIBOSOME PROTEIN L39/PROLYL-TRNA LIGASE FAMILY MEMBER"/>
    <property type="match status" value="1"/>
</dbReference>
<dbReference type="PANTHER" id="PTHR42753:SF2">
    <property type="entry name" value="PROLINE--TRNA LIGASE"/>
    <property type="match status" value="1"/>
</dbReference>
<dbReference type="Pfam" id="PF03129">
    <property type="entry name" value="HGTP_anticodon"/>
    <property type="match status" value="1"/>
</dbReference>
<dbReference type="Pfam" id="PF00587">
    <property type="entry name" value="tRNA-synt_2b"/>
    <property type="match status" value="1"/>
</dbReference>
<dbReference type="Pfam" id="PF04073">
    <property type="entry name" value="tRNA_edit"/>
    <property type="match status" value="1"/>
</dbReference>
<dbReference type="PIRSF" id="PIRSF001535">
    <property type="entry name" value="ProRS_1"/>
    <property type="match status" value="1"/>
</dbReference>
<dbReference type="PRINTS" id="PR01046">
    <property type="entry name" value="TRNASYNTHPRO"/>
</dbReference>
<dbReference type="SUPFAM" id="SSF52954">
    <property type="entry name" value="Class II aaRS ABD-related"/>
    <property type="match status" value="1"/>
</dbReference>
<dbReference type="SUPFAM" id="SSF55681">
    <property type="entry name" value="Class II aaRS and biotin synthetases"/>
    <property type="match status" value="1"/>
</dbReference>
<dbReference type="SUPFAM" id="SSF55826">
    <property type="entry name" value="YbaK/ProRS associated domain"/>
    <property type="match status" value="1"/>
</dbReference>
<dbReference type="PROSITE" id="PS50862">
    <property type="entry name" value="AA_TRNA_LIGASE_II"/>
    <property type="match status" value="1"/>
</dbReference>
<evidence type="ECO:0000255" key="1">
    <source>
        <dbReference type="HAMAP-Rule" id="MF_01569"/>
    </source>
</evidence>
<reference key="1">
    <citation type="journal article" date="2008" name="J. Bacteriol.">
        <title>The genome of Heliobacterium modesticaldum, a phototrophic representative of the Firmicutes containing the simplest photosynthetic apparatus.</title>
        <authorList>
            <person name="Sattley W.M."/>
            <person name="Madigan M.T."/>
            <person name="Swingley W.D."/>
            <person name="Cheung P.C."/>
            <person name="Clocksin K.M."/>
            <person name="Conrad A.L."/>
            <person name="Dejesa L.C."/>
            <person name="Honchak B.M."/>
            <person name="Jung D.O."/>
            <person name="Karbach L.E."/>
            <person name="Kurdoglu A."/>
            <person name="Lahiri S."/>
            <person name="Mastrian S.D."/>
            <person name="Page L.E."/>
            <person name="Taylor H.L."/>
            <person name="Wang Z.T."/>
            <person name="Raymond J."/>
            <person name="Chen M."/>
            <person name="Blankenship R.E."/>
            <person name="Touchman J.W."/>
        </authorList>
    </citation>
    <scope>NUCLEOTIDE SEQUENCE [LARGE SCALE GENOMIC DNA]</scope>
    <source>
        <strain>ATCC 51547 / Ice1</strain>
    </source>
</reference>
<comment type="function">
    <text evidence="1">Catalyzes the attachment of proline to tRNA(Pro) in a two-step reaction: proline is first activated by ATP to form Pro-AMP and then transferred to the acceptor end of tRNA(Pro). As ProRS can inadvertently accommodate and process non-cognate amino acids such as alanine and cysteine, to avoid such errors it has two additional distinct editing activities against alanine. One activity is designated as 'pretransfer' editing and involves the tRNA(Pro)-independent hydrolysis of activated Ala-AMP. The other activity is designated 'posttransfer' editing and involves deacylation of mischarged Ala-tRNA(Pro). The misacylated Cys-tRNA(Pro) is not edited by ProRS.</text>
</comment>
<comment type="catalytic activity">
    <reaction evidence="1">
        <text>tRNA(Pro) + L-proline + ATP = L-prolyl-tRNA(Pro) + AMP + diphosphate</text>
        <dbReference type="Rhea" id="RHEA:14305"/>
        <dbReference type="Rhea" id="RHEA-COMP:9700"/>
        <dbReference type="Rhea" id="RHEA-COMP:9702"/>
        <dbReference type="ChEBI" id="CHEBI:30616"/>
        <dbReference type="ChEBI" id="CHEBI:33019"/>
        <dbReference type="ChEBI" id="CHEBI:60039"/>
        <dbReference type="ChEBI" id="CHEBI:78442"/>
        <dbReference type="ChEBI" id="CHEBI:78532"/>
        <dbReference type="ChEBI" id="CHEBI:456215"/>
        <dbReference type="EC" id="6.1.1.15"/>
    </reaction>
</comment>
<comment type="subunit">
    <text evidence="1">Homodimer.</text>
</comment>
<comment type="subcellular location">
    <subcellularLocation>
        <location evidence="1">Cytoplasm</location>
    </subcellularLocation>
</comment>
<comment type="domain">
    <text evidence="1">Consists of three domains: the N-terminal catalytic domain, the editing domain and the C-terminal anticodon-binding domain.</text>
</comment>
<comment type="similarity">
    <text evidence="1">Belongs to the class-II aminoacyl-tRNA synthetase family. ProS type 1 subfamily.</text>
</comment>
<feature type="chain" id="PRO_1000199394" description="Proline--tRNA ligase">
    <location>
        <begin position="1"/>
        <end position="575"/>
    </location>
</feature>
<gene>
    <name evidence="1" type="primary">proS</name>
    <name type="ordered locus">Helmi_21980</name>
    <name type="ORF">HM1_2267</name>
</gene>
<name>SYP_HELMI</name>
<protein>
    <recommendedName>
        <fullName evidence="1">Proline--tRNA ligase</fullName>
        <ecNumber evidence="1">6.1.1.15</ecNumber>
    </recommendedName>
    <alternativeName>
        <fullName evidence="1">Prolyl-tRNA synthetase</fullName>
        <shortName evidence="1">ProRS</shortName>
    </alternativeName>
</protein>
<proteinExistence type="inferred from homology"/>
<organism>
    <name type="scientific">Heliobacterium modesticaldum (strain ATCC 51547 / Ice1)</name>
    <dbReference type="NCBI Taxonomy" id="498761"/>
    <lineage>
        <taxon>Bacteria</taxon>
        <taxon>Bacillati</taxon>
        <taxon>Bacillota</taxon>
        <taxon>Clostridia</taxon>
        <taxon>Eubacteriales</taxon>
        <taxon>Heliobacteriaceae</taxon>
        <taxon>Heliomicrobium</taxon>
    </lineage>
</organism>